<sequence>MEITFLGTSSGVPTRSRNVSSVALRLPQRAEVWLFDCGEGTQHQLLRSDVKISQITRIFVTHMHGDHIYGLTGLLASCGLAGSGQPIEIYGPPELKDYLKACAKYSHFKLPHHIRFHPIHPGILYEDAEFSVSCNLLKHRIPAYGYRIAESDRPGRFNVEKAKSLGIPPGPVYGELKQGKTVTLPDGRNIRGQDLCGERETGRKVIYCTDTVFCEGAIALSEDADVLIHEATFAHQDAQLAFDRLHSTSTMAAQVALAAQVKQLIMTHFSPRYAPGNALQLDDLLQEARAIFPNTILARDFMTYEVPRRSSD</sequence>
<organism>
    <name type="scientific">Crocosphaera subtropica (strain ATCC 51142 / BH68)</name>
    <name type="common">Cyanothece sp. (strain ATCC 51142)</name>
    <dbReference type="NCBI Taxonomy" id="43989"/>
    <lineage>
        <taxon>Bacteria</taxon>
        <taxon>Bacillati</taxon>
        <taxon>Cyanobacteriota</taxon>
        <taxon>Cyanophyceae</taxon>
        <taxon>Oscillatoriophycideae</taxon>
        <taxon>Chroococcales</taxon>
        <taxon>Aphanothecaceae</taxon>
        <taxon>Crocosphaera</taxon>
        <taxon>Crocosphaera subtropica</taxon>
    </lineage>
</organism>
<evidence type="ECO:0000255" key="1">
    <source>
        <dbReference type="HAMAP-Rule" id="MF_01818"/>
    </source>
</evidence>
<accession>B1WQW1</accession>
<protein>
    <recommendedName>
        <fullName evidence="1">Ribonuclease Z</fullName>
        <shortName evidence="1">RNase Z</shortName>
        <ecNumber evidence="1">3.1.26.11</ecNumber>
    </recommendedName>
    <alternativeName>
        <fullName evidence="1">tRNA 3 endonuclease</fullName>
    </alternativeName>
    <alternativeName>
        <fullName evidence="1">tRNase Z</fullName>
    </alternativeName>
</protein>
<reference key="1">
    <citation type="journal article" date="2008" name="Proc. Natl. Acad. Sci. U.S.A.">
        <title>The genome of Cyanothece 51142, a unicellular diazotrophic cyanobacterium important in the marine nitrogen cycle.</title>
        <authorList>
            <person name="Welsh E.A."/>
            <person name="Liberton M."/>
            <person name="Stoeckel J."/>
            <person name="Loh T."/>
            <person name="Elvitigala T."/>
            <person name="Wang C."/>
            <person name="Wollam A."/>
            <person name="Fulton R.S."/>
            <person name="Clifton S.W."/>
            <person name="Jacobs J.M."/>
            <person name="Aurora R."/>
            <person name="Ghosh B.K."/>
            <person name="Sherman L.A."/>
            <person name="Smith R.D."/>
            <person name="Wilson R.K."/>
            <person name="Pakrasi H.B."/>
        </authorList>
    </citation>
    <scope>NUCLEOTIDE SEQUENCE [LARGE SCALE GENOMIC DNA]</scope>
    <source>
        <strain>ATCC 51142 / BH68</strain>
    </source>
</reference>
<comment type="function">
    <text evidence="1">Zinc phosphodiesterase, which displays some tRNA 3'-processing endonuclease activity. Probably involved in tRNA maturation, by removing a 3'-trailer from precursor tRNA.</text>
</comment>
<comment type="catalytic activity">
    <reaction evidence="1">
        <text>Endonucleolytic cleavage of RNA, removing extra 3' nucleotides from tRNA precursor, generating 3' termini of tRNAs. A 3'-hydroxy group is left at the tRNA terminus and a 5'-phosphoryl group is left at the trailer molecule.</text>
        <dbReference type="EC" id="3.1.26.11"/>
    </reaction>
</comment>
<comment type="cofactor">
    <cofactor evidence="1">
        <name>Zn(2+)</name>
        <dbReference type="ChEBI" id="CHEBI:29105"/>
    </cofactor>
    <text evidence="1">Binds 2 Zn(2+) ions.</text>
</comment>
<comment type="subunit">
    <text evidence="1">Homodimer.</text>
</comment>
<comment type="similarity">
    <text evidence="1">Belongs to the RNase Z family.</text>
</comment>
<gene>
    <name evidence="1" type="primary">rnz</name>
    <name type="ordered locus">cce_4065</name>
</gene>
<dbReference type="EC" id="3.1.26.11" evidence="1"/>
<dbReference type="EMBL" id="CP000806">
    <property type="protein sequence ID" value="ACB53413.1"/>
    <property type="molecule type" value="Genomic_DNA"/>
</dbReference>
<dbReference type="RefSeq" id="WP_009543851.1">
    <property type="nucleotide sequence ID" value="NC_010546.1"/>
</dbReference>
<dbReference type="SMR" id="B1WQW1"/>
<dbReference type="STRING" id="43989.cce_4065"/>
<dbReference type="KEGG" id="cyt:cce_4065"/>
<dbReference type="eggNOG" id="COG1234">
    <property type="taxonomic scope" value="Bacteria"/>
</dbReference>
<dbReference type="HOGENOM" id="CLU_031317_2_0_3"/>
<dbReference type="OrthoDB" id="9800940at2"/>
<dbReference type="Proteomes" id="UP000001203">
    <property type="component" value="Chromosome circular"/>
</dbReference>
<dbReference type="GO" id="GO:0042781">
    <property type="term" value="F:3'-tRNA processing endoribonuclease activity"/>
    <property type="evidence" value="ECO:0007669"/>
    <property type="project" value="UniProtKB-UniRule"/>
</dbReference>
<dbReference type="GO" id="GO:0008270">
    <property type="term" value="F:zinc ion binding"/>
    <property type="evidence" value="ECO:0007669"/>
    <property type="project" value="UniProtKB-UniRule"/>
</dbReference>
<dbReference type="CDD" id="cd07717">
    <property type="entry name" value="RNaseZ_ZiPD-like_MBL-fold"/>
    <property type="match status" value="1"/>
</dbReference>
<dbReference type="FunFam" id="3.60.15.10:FF:000002">
    <property type="entry name" value="Ribonuclease Z"/>
    <property type="match status" value="1"/>
</dbReference>
<dbReference type="Gene3D" id="3.60.15.10">
    <property type="entry name" value="Ribonuclease Z/Hydroxyacylglutathione hydrolase-like"/>
    <property type="match status" value="1"/>
</dbReference>
<dbReference type="HAMAP" id="MF_01818">
    <property type="entry name" value="RNase_Z_BN"/>
    <property type="match status" value="1"/>
</dbReference>
<dbReference type="InterPro" id="IPR001279">
    <property type="entry name" value="Metallo-B-lactamas"/>
</dbReference>
<dbReference type="InterPro" id="IPR036866">
    <property type="entry name" value="RibonucZ/Hydroxyglut_hydro"/>
</dbReference>
<dbReference type="InterPro" id="IPR013471">
    <property type="entry name" value="RNase_Z/BN"/>
</dbReference>
<dbReference type="NCBIfam" id="NF000801">
    <property type="entry name" value="PRK00055.1-3"/>
    <property type="match status" value="1"/>
</dbReference>
<dbReference type="NCBIfam" id="TIGR02651">
    <property type="entry name" value="RNase_Z"/>
    <property type="match status" value="1"/>
</dbReference>
<dbReference type="PANTHER" id="PTHR46018">
    <property type="entry name" value="ZINC PHOSPHODIESTERASE ELAC PROTEIN 1"/>
    <property type="match status" value="1"/>
</dbReference>
<dbReference type="PANTHER" id="PTHR46018:SF2">
    <property type="entry name" value="ZINC PHOSPHODIESTERASE ELAC PROTEIN 1"/>
    <property type="match status" value="1"/>
</dbReference>
<dbReference type="Pfam" id="PF12706">
    <property type="entry name" value="Lactamase_B_2"/>
    <property type="match status" value="2"/>
</dbReference>
<dbReference type="SMART" id="SM00849">
    <property type="entry name" value="Lactamase_B"/>
    <property type="match status" value="1"/>
</dbReference>
<dbReference type="SUPFAM" id="SSF56281">
    <property type="entry name" value="Metallo-hydrolase/oxidoreductase"/>
    <property type="match status" value="1"/>
</dbReference>
<name>RNZ_CROS5</name>
<keyword id="KW-0255">Endonuclease</keyword>
<keyword id="KW-0378">Hydrolase</keyword>
<keyword id="KW-0479">Metal-binding</keyword>
<keyword id="KW-0540">Nuclease</keyword>
<keyword id="KW-1185">Reference proteome</keyword>
<keyword id="KW-0819">tRNA processing</keyword>
<keyword id="KW-0862">Zinc</keyword>
<proteinExistence type="inferred from homology"/>
<feature type="chain" id="PRO_1000187948" description="Ribonuclease Z">
    <location>
        <begin position="1"/>
        <end position="312"/>
    </location>
</feature>
<feature type="active site" description="Proton acceptor" evidence="1">
    <location>
        <position position="66"/>
    </location>
</feature>
<feature type="binding site" evidence="1">
    <location>
        <position position="62"/>
    </location>
    <ligand>
        <name>Zn(2+)</name>
        <dbReference type="ChEBI" id="CHEBI:29105"/>
        <label>1</label>
        <note>catalytic</note>
    </ligand>
</feature>
<feature type="binding site" evidence="1">
    <location>
        <position position="64"/>
    </location>
    <ligand>
        <name>Zn(2+)</name>
        <dbReference type="ChEBI" id="CHEBI:29105"/>
        <label>1</label>
        <note>catalytic</note>
    </ligand>
</feature>
<feature type="binding site" evidence="1">
    <location>
        <position position="66"/>
    </location>
    <ligand>
        <name>Zn(2+)</name>
        <dbReference type="ChEBI" id="CHEBI:29105"/>
        <label>2</label>
        <note>catalytic</note>
    </ligand>
</feature>
<feature type="binding site" evidence="1">
    <location>
        <position position="67"/>
    </location>
    <ligand>
        <name>Zn(2+)</name>
        <dbReference type="ChEBI" id="CHEBI:29105"/>
        <label>2</label>
        <note>catalytic</note>
    </ligand>
</feature>
<feature type="binding site" evidence="1">
    <location>
        <position position="139"/>
    </location>
    <ligand>
        <name>Zn(2+)</name>
        <dbReference type="ChEBI" id="CHEBI:29105"/>
        <label>1</label>
        <note>catalytic</note>
    </ligand>
</feature>
<feature type="binding site" evidence="1">
    <location>
        <position position="210"/>
    </location>
    <ligand>
        <name>Zn(2+)</name>
        <dbReference type="ChEBI" id="CHEBI:29105"/>
        <label>1</label>
        <note>catalytic</note>
    </ligand>
</feature>
<feature type="binding site" evidence="1">
    <location>
        <position position="210"/>
    </location>
    <ligand>
        <name>Zn(2+)</name>
        <dbReference type="ChEBI" id="CHEBI:29105"/>
        <label>2</label>
        <note>catalytic</note>
    </ligand>
</feature>
<feature type="binding site" evidence="1">
    <location>
        <position position="268"/>
    </location>
    <ligand>
        <name>Zn(2+)</name>
        <dbReference type="ChEBI" id="CHEBI:29105"/>
        <label>2</label>
        <note>catalytic</note>
    </ligand>
</feature>